<keyword id="KW-0963">Cytoplasm</keyword>
<keyword id="KW-0238">DNA-binding</keyword>
<keyword id="KW-0597">Phosphoprotein</keyword>
<keyword id="KW-0716">Sensory transduction</keyword>
<keyword id="KW-0804">Transcription</keyword>
<keyword id="KW-0805">Transcription regulation</keyword>
<keyword id="KW-0902">Two-component regulatory system</keyword>
<keyword id="KW-0843">Virulence</keyword>
<evidence type="ECO:0000250" key="1"/>
<evidence type="ECO:0000255" key="2">
    <source>
        <dbReference type="PROSITE-ProRule" id="PRU00169"/>
    </source>
</evidence>
<evidence type="ECO:0000255" key="3">
    <source>
        <dbReference type="PROSITE-ProRule" id="PRU01091"/>
    </source>
</evidence>
<dbReference type="EMBL" id="BA000033">
    <property type="protein sequence ID" value="BAB94533.1"/>
    <property type="molecule type" value="Genomic_DNA"/>
</dbReference>
<dbReference type="RefSeq" id="WP_000149344.1">
    <property type="nucleotide sequence ID" value="NC_003923.1"/>
</dbReference>
<dbReference type="SMR" id="Q7A1J1"/>
<dbReference type="KEGG" id="sam:MW0668"/>
<dbReference type="HOGENOM" id="CLU_000445_30_4_9"/>
<dbReference type="GO" id="GO:0005829">
    <property type="term" value="C:cytosol"/>
    <property type="evidence" value="ECO:0007669"/>
    <property type="project" value="TreeGrafter"/>
</dbReference>
<dbReference type="GO" id="GO:0032993">
    <property type="term" value="C:protein-DNA complex"/>
    <property type="evidence" value="ECO:0007669"/>
    <property type="project" value="TreeGrafter"/>
</dbReference>
<dbReference type="GO" id="GO:0000156">
    <property type="term" value="F:phosphorelay response regulator activity"/>
    <property type="evidence" value="ECO:0007669"/>
    <property type="project" value="TreeGrafter"/>
</dbReference>
<dbReference type="GO" id="GO:0000976">
    <property type="term" value="F:transcription cis-regulatory region binding"/>
    <property type="evidence" value="ECO:0007669"/>
    <property type="project" value="TreeGrafter"/>
</dbReference>
<dbReference type="GO" id="GO:0006355">
    <property type="term" value="P:regulation of DNA-templated transcription"/>
    <property type="evidence" value="ECO:0007669"/>
    <property type="project" value="InterPro"/>
</dbReference>
<dbReference type="CDD" id="cd17574">
    <property type="entry name" value="REC_OmpR"/>
    <property type="match status" value="1"/>
</dbReference>
<dbReference type="CDD" id="cd00383">
    <property type="entry name" value="trans_reg_C"/>
    <property type="match status" value="1"/>
</dbReference>
<dbReference type="FunFam" id="1.10.10.10:FF:000018">
    <property type="entry name" value="DNA-binding response regulator ResD"/>
    <property type="match status" value="1"/>
</dbReference>
<dbReference type="Gene3D" id="3.40.50.2300">
    <property type="match status" value="1"/>
</dbReference>
<dbReference type="Gene3D" id="6.10.250.690">
    <property type="match status" value="1"/>
</dbReference>
<dbReference type="Gene3D" id="1.10.10.10">
    <property type="entry name" value="Winged helix-like DNA-binding domain superfamily/Winged helix DNA-binding domain"/>
    <property type="match status" value="1"/>
</dbReference>
<dbReference type="InterPro" id="IPR011006">
    <property type="entry name" value="CheY-like_superfamily"/>
</dbReference>
<dbReference type="InterPro" id="IPR001867">
    <property type="entry name" value="OmpR/PhoB-type_DNA-bd"/>
</dbReference>
<dbReference type="InterPro" id="IPR001789">
    <property type="entry name" value="Sig_transdc_resp-reg_receiver"/>
</dbReference>
<dbReference type="InterPro" id="IPR039420">
    <property type="entry name" value="WalR-like"/>
</dbReference>
<dbReference type="InterPro" id="IPR036388">
    <property type="entry name" value="WH-like_DNA-bd_sf"/>
</dbReference>
<dbReference type="PANTHER" id="PTHR48111">
    <property type="entry name" value="REGULATOR OF RPOS"/>
    <property type="match status" value="1"/>
</dbReference>
<dbReference type="PANTHER" id="PTHR48111:SF2">
    <property type="entry name" value="RESPONSE REGULATOR SAER"/>
    <property type="match status" value="1"/>
</dbReference>
<dbReference type="Pfam" id="PF00072">
    <property type="entry name" value="Response_reg"/>
    <property type="match status" value="1"/>
</dbReference>
<dbReference type="Pfam" id="PF00486">
    <property type="entry name" value="Trans_reg_C"/>
    <property type="match status" value="1"/>
</dbReference>
<dbReference type="SMART" id="SM00448">
    <property type="entry name" value="REC"/>
    <property type="match status" value="1"/>
</dbReference>
<dbReference type="SMART" id="SM00862">
    <property type="entry name" value="Trans_reg_C"/>
    <property type="match status" value="1"/>
</dbReference>
<dbReference type="SUPFAM" id="SSF52172">
    <property type="entry name" value="CheY-like"/>
    <property type="match status" value="1"/>
</dbReference>
<dbReference type="PROSITE" id="PS51755">
    <property type="entry name" value="OMPR_PHOB"/>
    <property type="match status" value="1"/>
</dbReference>
<dbReference type="PROSITE" id="PS50110">
    <property type="entry name" value="RESPONSE_REGULATORY"/>
    <property type="match status" value="1"/>
</dbReference>
<name>SAER_STAAW</name>
<organism>
    <name type="scientific">Staphylococcus aureus (strain MW2)</name>
    <dbReference type="NCBI Taxonomy" id="196620"/>
    <lineage>
        <taxon>Bacteria</taxon>
        <taxon>Bacillati</taxon>
        <taxon>Bacillota</taxon>
        <taxon>Bacilli</taxon>
        <taxon>Bacillales</taxon>
        <taxon>Staphylococcaceae</taxon>
        <taxon>Staphylococcus</taxon>
    </lineage>
</organism>
<comment type="function">
    <text evidence="1">Member of the two-component regulatory system SaeR/SaeS involved in the regulation of staphylococcal virulence factors in a strain-dependent fashion. Probably functions as a transcriptional regulator via a specific DNA-binding domain, recognizing motifs near the promoter sequences of target genes (By similarity).</text>
</comment>
<comment type="subcellular location">
    <subcellularLocation>
        <location evidence="1">Cytoplasm</location>
    </subcellularLocation>
</comment>
<comment type="PTM">
    <text evidence="1">Phosphorylated by SaeS.</text>
</comment>
<feature type="chain" id="PRO_0000295923" description="Response regulator SaeR">
    <location>
        <begin position="1"/>
        <end position="228"/>
    </location>
</feature>
<feature type="domain" description="Response regulatory" evidence="2">
    <location>
        <begin position="3"/>
        <end position="116"/>
    </location>
</feature>
<feature type="DNA-binding region" description="OmpR/PhoB-type" evidence="3">
    <location>
        <begin position="127"/>
        <end position="226"/>
    </location>
</feature>
<feature type="modified residue" description="4-aspartylphosphate" evidence="2">
    <location>
        <position position="51"/>
    </location>
</feature>
<sequence length="228" mass="26858">MTHLLIVDDEQDIVDICQTYFEYEGYKVTTTTSGKEAISLLSNDIDIMVLDIMMPEVNGYDIVKEMKRQKLDIPFIYLTAKTQEHDTIYALTLGADDYVKKPFSPRELVLRINNLLTRMKKYHHQPVEQLSFDELTLINLSKVVTVNGHEVPMRIKEFELLWYLASRENEVISKSELLEKVWGYDYYEDANTVNVHIHRIREKLEKESFTTYTITTVWGLGYKFERSR</sequence>
<gene>
    <name type="primary">saeR</name>
    <name type="ordered locus">MW0668</name>
</gene>
<reference key="1">
    <citation type="journal article" date="2002" name="Lancet">
        <title>Genome and virulence determinants of high virulence community-acquired MRSA.</title>
        <authorList>
            <person name="Baba T."/>
            <person name="Takeuchi F."/>
            <person name="Kuroda M."/>
            <person name="Yuzawa H."/>
            <person name="Aoki K."/>
            <person name="Oguchi A."/>
            <person name="Nagai Y."/>
            <person name="Iwama N."/>
            <person name="Asano K."/>
            <person name="Naimi T."/>
            <person name="Kuroda H."/>
            <person name="Cui L."/>
            <person name="Yamamoto K."/>
            <person name="Hiramatsu K."/>
        </authorList>
    </citation>
    <scope>NUCLEOTIDE SEQUENCE [LARGE SCALE GENOMIC DNA]</scope>
    <source>
        <strain>MW2</strain>
    </source>
</reference>
<proteinExistence type="inferred from homology"/>
<accession>Q7A1J1</accession>
<protein>
    <recommendedName>
        <fullName>Response regulator SaeR</fullName>
    </recommendedName>
    <alternativeName>
        <fullName>Staphylococcus exoprotein expression protein R</fullName>
    </alternativeName>
</protein>